<sequence>MKFFVIALIVLLGLLQYRLWSGDNSLPEYFVLQKQIAAQQEGNAKLNERNQVLKEEIIDLKSGTEAIEERARNELGMVKEGETFYRVVGGDRSVSSPSQ</sequence>
<name>FTSB_SHESA</name>
<accession>A0KU83</accession>
<protein>
    <recommendedName>
        <fullName evidence="1">Cell division protein FtsB</fullName>
    </recommendedName>
</protein>
<feature type="chain" id="PRO_1000025723" description="Cell division protein FtsB">
    <location>
        <begin position="1"/>
        <end position="99"/>
    </location>
</feature>
<feature type="topological domain" description="Cytoplasmic" evidence="1">
    <location>
        <begin position="1"/>
        <end position="3"/>
    </location>
</feature>
<feature type="transmembrane region" description="Helical" evidence="1">
    <location>
        <begin position="4"/>
        <end position="21"/>
    </location>
</feature>
<feature type="topological domain" description="Periplasmic" evidence="1">
    <location>
        <begin position="22"/>
        <end position="99"/>
    </location>
</feature>
<feature type="coiled-coil region" evidence="1">
    <location>
        <begin position="31"/>
        <end position="73"/>
    </location>
</feature>
<gene>
    <name evidence="1" type="primary">ftsB</name>
    <name type="ordered locus">Shewana3_1117</name>
</gene>
<keyword id="KW-0131">Cell cycle</keyword>
<keyword id="KW-0132">Cell division</keyword>
<keyword id="KW-0997">Cell inner membrane</keyword>
<keyword id="KW-1003">Cell membrane</keyword>
<keyword id="KW-0175">Coiled coil</keyword>
<keyword id="KW-0472">Membrane</keyword>
<keyword id="KW-0812">Transmembrane</keyword>
<keyword id="KW-1133">Transmembrane helix</keyword>
<reference key="1">
    <citation type="submission" date="2006-09" db="EMBL/GenBank/DDBJ databases">
        <title>Complete sequence of chromosome 1 of Shewanella sp. ANA-3.</title>
        <authorList>
            <person name="Copeland A."/>
            <person name="Lucas S."/>
            <person name="Lapidus A."/>
            <person name="Barry K."/>
            <person name="Detter J.C."/>
            <person name="Glavina del Rio T."/>
            <person name="Hammon N."/>
            <person name="Israni S."/>
            <person name="Dalin E."/>
            <person name="Tice H."/>
            <person name="Pitluck S."/>
            <person name="Chertkov O."/>
            <person name="Brettin T."/>
            <person name="Bruce D."/>
            <person name="Han C."/>
            <person name="Tapia R."/>
            <person name="Gilna P."/>
            <person name="Schmutz J."/>
            <person name="Larimer F."/>
            <person name="Land M."/>
            <person name="Hauser L."/>
            <person name="Kyrpides N."/>
            <person name="Kim E."/>
            <person name="Newman D."/>
            <person name="Salticov C."/>
            <person name="Konstantinidis K."/>
            <person name="Klappenback J."/>
            <person name="Tiedje J."/>
            <person name="Richardson P."/>
        </authorList>
    </citation>
    <scope>NUCLEOTIDE SEQUENCE [LARGE SCALE GENOMIC DNA]</scope>
    <source>
        <strain>ANA-3</strain>
    </source>
</reference>
<comment type="function">
    <text evidence="1">Essential cell division protein. May link together the upstream cell division proteins, which are predominantly cytoplasmic, with the downstream cell division proteins, which are predominantly periplasmic.</text>
</comment>
<comment type="subunit">
    <text evidence="1">Part of a complex composed of FtsB, FtsL and FtsQ.</text>
</comment>
<comment type="subcellular location">
    <subcellularLocation>
        <location evidence="1">Cell inner membrane</location>
        <topology evidence="1">Single-pass type II membrane protein</topology>
    </subcellularLocation>
    <text evidence="1">Localizes to the division septum.</text>
</comment>
<comment type="similarity">
    <text evidence="1">Belongs to the FtsB family.</text>
</comment>
<organism>
    <name type="scientific">Shewanella sp. (strain ANA-3)</name>
    <dbReference type="NCBI Taxonomy" id="94122"/>
    <lineage>
        <taxon>Bacteria</taxon>
        <taxon>Pseudomonadati</taxon>
        <taxon>Pseudomonadota</taxon>
        <taxon>Gammaproteobacteria</taxon>
        <taxon>Alteromonadales</taxon>
        <taxon>Shewanellaceae</taxon>
        <taxon>Shewanella</taxon>
    </lineage>
</organism>
<evidence type="ECO:0000255" key="1">
    <source>
        <dbReference type="HAMAP-Rule" id="MF_00599"/>
    </source>
</evidence>
<dbReference type="EMBL" id="CP000469">
    <property type="protein sequence ID" value="ABK47352.1"/>
    <property type="molecule type" value="Genomic_DNA"/>
</dbReference>
<dbReference type="SMR" id="A0KU83"/>
<dbReference type="STRING" id="94122.Shewana3_1117"/>
<dbReference type="KEGG" id="shn:Shewana3_1117"/>
<dbReference type="eggNOG" id="COG2919">
    <property type="taxonomic scope" value="Bacteria"/>
</dbReference>
<dbReference type="HOGENOM" id="CLU_134863_5_2_6"/>
<dbReference type="OrthoDB" id="7061211at2"/>
<dbReference type="Proteomes" id="UP000002589">
    <property type="component" value="Chromosome"/>
</dbReference>
<dbReference type="GO" id="GO:0032153">
    <property type="term" value="C:cell division site"/>
    <property type="evidence" value="ECO:0007669"/>
    <property type="project" value="UniProtKB-UniRule"/>
</dbReference>
<dbReference type="GO" id="GO:0030428">
    <property type="term" value="C:cell septum"/>
    <property type="evidence" value="ECO:0007669"/>
    <property type="project" value="TreeGrafter"/>
</dbReference>
<dbReference type="GO" id="GO:0005886">
    <property type="term" value="C:plasma membrane"/>
    <property type="evidence" value="ECO:0007669"/>
    <property type="project" value="UniProtKB-SubCell"/>
</dbReference>
<dbReference type="GO" id="GO:0043093">
    <property type="term" value="P:FtsZ-dependent cytokinesis"/>
    <property type="evidence" value="ECO:0007669"/>
    <property type="project" value="UniProtKB-UniRule"/>
</dbReference>
<dbReference type="HAMAP" id="MF_00599">
    <property type="entry name" value="FtsB"/>
    <property type="match status" value="1"/>
</dbReference>
<dbReference type="InterPro" id="IPR023081">
    <property type="entry name" value="Cell_div_FtsB"/>
</dbReference>
<dbReference type="InterPro" id="IPR007060">
    <property type="entry name" value="FtsL/DivIC"/>
</dbReference>
<dbReference type="NCBIfam" id="NF002058">
    <property type="entry name" value="PRK00888.1"/>
    <property type="match status" value="1"/>
</dbReference>
<dbReference type="PANTHER" id="PTHR37485">
    <property type="entry name" value="CELL DIVISION PROTEIN FTSB"/>
    <property type="match status" value="1"/>
</dbReference>
<dbReference type="PANTHER" id="PTHR37485:SF1">
    <property type="entry name" value="CELL DIVISION PROTEIN FTSB"/>
    <property type="match status" value="1"/>
</dbReference>
<dbReference type="Pfam" id="PF04977">
    <property type="entry name" value="DivIC"/>
    <property type="match status" value="1"/>
</dbReference>
<proteinExistence type="inferred from homology"/>